<organism>
    <name type="scientific">Ectopseudomonas mendocina (strain ymp)</name>
    <name type="common">Pseudomonas mendocina</name>
    <dbReference type="NCBI Taxonomy" id="399739"/>
    <lineage>
        <taxon>Bacteria</taxon>
        <taxon>Pseudomonadati</taxon>
        <taxon>Pseudomonadota</taxon>
        <taxon>Gammaproteobacteria</taxon>
        <taxon>Pseudomonadales</taxon>
        <taxon>Pseudomonadaceae</taxon>
        <taxon>Ectopseudomonas</taxon>
    </lineage>
</organism>
<proteinExistence type="inferred from homology"/>
<keyword id="KW-0004">4Fe-4S</keyword>
<keyword id="KW-0408">Iron</keyword>
<keyword id="KW-0411">Iron-sulfur</keyword>
<keyword id="KW-0456">Lyase</keyword>
<keyword id="KW-0479">Metal-binding</keyword>
<keyword id="KW-0949">S-adenosyl-L-methionine</keyword>
<keyword id="KW-0784">Thiamine biosynthesis</keyword>
<keyword id="KW-0862">Zinc</keyword>
<reference key="1">
    <citation type="submission" date="2007-04" db="EMBL/GenBank/DDBJ databases">
        <title>Complete sequence of Pseudomonas mendocina ymp.</title>
        <authorList>
            <consortium name="US DOE Joint Genome Institute"/>
            <person name="Copeland A."/>
            <person name="Lucas S."/>
            <person name="Lapidus A."/>
            <person name="Barry K."/>
            <person name="Glavina del Rio T."/>
            <person name="Dalin E."/>
            <person name="Tice H."/>
            <person name="Pitluck S."/>
            <person name="Kiss H."/>
            <person name="Brettin T."/>
            <person name="Detter J.C."/>
            <person name="Bruce D."/>
            <person name="Han C."/>
            <person name="Schmutz J."/>
            <person name="Larimer F."/>
            <person name="Land M."/>
            <person name="Hauser L."/>
            <person name="Kyrpides N."/>
            <person name="Mikhailova N."/>
            <person name="Hersman L."/>
            <person name="Dubois J."/>
            <person name="Maurice P."/>
            <person name="Richardson P."/>
        </authorList>
    </citation>
    <scope>NUCLEOTIDE SEQUENCE [LARGE SCALE GENOMIC DNA]</scope>
    <source>
        <strain>ymp</strain>
    </source>
</reference>
<evidence type="ECO:0000255" key="1">
    <source>
        <dbReference type="HAMAP-Rule" id="MF_00089"/>
    </source>
</evidence>
<evidence type="ECO:0000256" key="2">
    <source>
        <dbReference type="SAM" id="MobiDB-lite"/>
    </source>
</evidence>
<protein>
    <recommendedName>
        <fullName evidence="1">Phosphomethylpyrimidine synthase</fullName>
        <ecNumber evidence="1">4.1.99.17</ecNumber>
    </recommendedName>
    <alternativeName>
        <fullName evidence="1">Hydroxymethylpyrimidine phosphate synthase</fullName>
        <shortName evidence="1">HMP-P synthase</shortName>
        <shortName evidence="1">HMP-phosphate synthase</shortName>
        <shortName evidence="1">HMPP synthase</shortName>
    </alternativeName>
    <alternativeName>
        <fullName evidence="1">Thiamine biosynthesis protein ThiC</fullName>
    </alternativeName>
</protein>
<name>THIC_ECTM1</name>
<comment type="function">
    <text evidence="1">Catalyzes the synthesis of the hydroxymethylpyrimidine phosphate (HMP-P) moiety of thiamine from aminoimidazole ribotide (AIR) in a radical S-adenosyl-L-methionine (SAM)-dependent reaction.</text>
</comment>
<comment type="catalytic activity">
    <reaction evidence="1">
        <text>5-amino-1-(5-phospho-beta-D-ribosyl)imidazole + S-adenosyl-L-methionine = 4-amino-2-methyl-5-(phosphooxymethyl)pyrimidine + CO + 5'-deoxyadenosine + formate + L-methionine + 3 H(+)</text>
        <dbReference type="Rhea" id="RHEA:24840"/>
        <dbReference type="ChEBI" id="CHEBI:15378"/>
        <dbReference type="ChEBI" id="CHEBI:15740"/>
        <dbReference type="ChEBI" id="CHEBI:17245"/>
        <dbReference type="ChEBI" id="CHEBI:17319"/>
        <dbReference type="ChEBI" id="CHEBI:57844"/>
        <dbReference type="ChEBI" id="CHEBI:58354"/>
        <dbReference type="ChEBI" id="CHEBI:59789"/>
        <dbReference type="ChEBI" id="CHEBI:137981"/>
        <dbReference type="EC" id="4.1.99.17"/>
    </reaction>
</comment>
<comment type="cofactor">
    <cofactor evidence="1">
        <name>[4Fe-4S] cluster</name>
        <dbReference type="ChEBI" id="CHEBI:49883"/>
    </cofactor>
    <text evidence="1">Binds 1 [4Fe-4S] cluster per subunit. The cluster is coordinated with 3 cysteines and an exchangeable S-adenosyl-L-methionine.</text>
</comment>
<comment type="pathway">
    <text evidence="1">Cofactor biosynthesis; thiamine diphosphate biosynthesis.</text>
</comment>
<comment type="subunit">
    <text evidence="1">Homodimer.</text>
</comment>
<comment type="similarity">
    <text evidence="1">Belongs to the ThiC family.</text>
</comment>
<sequence>MSAQQQKNLSESAQVDQQSVQPFPRSQKVYVQGSRPDIRVPMREISLDVTPTDFGGEINAPVTVYDTSGPYTDPNVTIDVRKGLSDVRSAWIEDRGDTEKLPGLSSEFGQRRLNDAELSAMRFAHVRNPRRARAGHNVSQMHYAKKGIITPEMEFVAIRENMKLAEAREAGLLNEQHAGHSFGASIPKEITPEFVRSEVARGRAIIPANINHVELEPMIIGRNFLVKINGNIGNSALGSSIEEEVAKLTWGIRWGSDTVMDLSTGKHIHETREWIIRNSPVPIGTVPIYQALEKVGGIAEDLTWELFRDTLIEQAEQGVDYFTIHAGVLLRYVPLTAKRVTGIVSRGGSIMAKWCLAHHKENFLYTHFEDICEIMKAYDVSFSLGDGLRPGSIADANDAAQFGELETLGELTKIAWKHDVQCMIEGPGHVPMQLIKENMDKQLECCDEAPFYTLGPLTTDIAPGYDHITSGIGAAMIGWFGCAMLCYVTPKEHLGLPNKDDVKTGIITYKIAAHAADLAKGHPGAQIRDNALSKARFEFRWEDQFNLGLDPDTARAFHDETLPKDSAKVAHFCSMCGPKFCSMKITQEVRDYAKEQRIDAVDLDAEQGMQAKAAEFKAQGSQLYQKV</sequence>
<dbReference type="EC" id="4.1.99.17" evidence="1"/>
<dbReference type="EMBL" id="CP000680">
    <property type="protein sequence ID" value="ABP83377.1"/>
    <property type="molecule type" value="Genomic_DNA"/>
</dbReference>
<dbReference type="SMR" id="A4XPW1"/>
<dbReference type="STRING" id="399739.Pmen_0609"/>
<dbReference type="KEGG" id="pmy:Pmen_0609"/>
<dbReference type="PATRIC" id="fig|399739.8.peg.616"/>
<dbReference type="eggNOG" id="COG0422">
    <property type="taxonomic scope" value="Bacteria"/>
</dbReference>
<dbReference type="HOGENOM" id="CLU_013181_2_1_6"/>
<dbReference type="OrthoDB" id="9805897at2"/>
<dbReference type="UniPathway" id="UPA00060"/>
<dbReference type="GO" id="GO:0005829">
    <property type="term" value="C:cytosol"/>
    <property type="evidence" value="ECO:0007669"/>
    <property type="project" value="TreeGrafter"/>
</dbReference>
<dbReference type="GO" id="GO:0051539">
    <property type="term" value="F:4 iron, 4 sulfur cluster binding"/>
    <property type="evidence" value="ECO:0007669"/>
    <property type="project" value="UniProtKB-KW"/>
</dbReference>
<dbReference type="GO" id="GO:0016830">
    <property type="term" value="F:carbon-carbon lyase activity"/>
    <property type="evidence" value="ECO:0007669"/>
    <property type="project" value="InterPro"/>
</dbReference>
<dbReference type="GO" id="GO:0008270">
    <property type="term" value="F:zinc ion binding"/>
    <property type="evidence" value="ECO:0007669"/>
    <property type="project" value="UniProtKB-UniRule"/>
</dbReference>
<dbReference type="GO" id="GO:0009228">
    <property type="term" value="P:thiamine biosynthetic process"/>
    <property type="evidence" value="ECO:0007669"/>
    <property type="project" value="UniProtKB-KW"/>
</dbReference>
<dbReference type="GO" id="GO:0009229">
    <property type="term" value="P:thiamine diphosphate biosynthetic process"/>
    <property type="evidence" value="ECO:0007669"/>
    <property type="project" value="UniProtKB-UniRule"/>
</dbReference>
<dbReference type="FunFam" id="3.20.20.540:FF:000001">
    <property type="entry name" value="Phosphomethylpyrimidine synthase"/>
    <property type="match status" value="1"/>
</dbReference>
<dbReference type="Gene3D" id="6.10.250.620">
    <property type="match status" value="1"/>
</dbReference>
<dbReference type="Gene3D" id="3.20.20.540">
    <property type="entry name" value="Radical SAM ThiC family, central domain"/>
    <property type="match status" value="1"/>
</dbReference>
<dbReference type="HAMAP" id="MF_00089">
    <property type="entry name" value="ThiC"/>
    <property type="match status" value="1"/>
</dbReference>
<dbReference type="InterPro" id="IPR037509">
    <property type="entry name" value="ThiC"/>
</dbReference>
<dbReference type="InterPro" id="IPR025747">
    <property type="entry name" value="ThiC-associated_dom"/>
</dbReference>
<dbReference type="InterPro" id="IPR038521">
    <property type="entry name" value="ThiC/Bza_core_dom"/>
</dbReference>
<dbReference type="InterPro" id="IPR002817">
    <property type="entry name" value="ThiC/BzaA/B"/>
</dbReference>
<dbReference type="NCBIfam" id="NF006763">
    <property type="entry name" value="PRK09284.1"/>
    <property type="match status" value="1"/>
</dbReference>
<dbReference type="NCBIfam" id="NF009895">
    <property type="entry name" value="PRK13352.1"/>
    <property type="match status" value="1"/>
</dbReference>
<dbReference type="NCBIfam" id="TIGR00190">
    <property type="entry name" value="thiC"/>
    <property type="match status" value="1"/>
</dbReference>
<dbReference type="PANTHER" id="PTHR30557:SF1">
    <property type="entry name" value="PHOSPHOMETHYLPYRIMIDINE SYNTHASE, CHLOROPLASTIC"/>
    <property type="match status" value="1"/>
</dbReference>
<dbReference type="PANTHER" id="PTHR30557">
    <property type="entry name" value="THIAMINE BIOSYNTHESIS PROTEIN THIC"/>
    <property type="match status" value="1"/>
</dbReference>
<dbReference type="Pfam" id="PF13667">
    <property type="entry name" value="ThiC-associated"/>
    <property type="match status" value="1"/>
</dbReference>
<dbReference type="Pfam" id="PF01964">
    <property type="entry name" value="ThiC_Rad_SAM"/>
    <property type="match status" value="1"/>
</dbReference>
<dbReference type="SFLD" id="SFLDF00407">
    <property type="entry name" value="phosphomethylpyrimidine_syntha"/>
    <property type="match status" value="1"/>
</dbReference>
<dbReference type="SFLD" id="SFLDG01114">
    <property type="entry name" value="phosphomethylpyrimidine_syntha"/>
    <property type="match status" value="1"/>
</dbReference>
<dbReference type="SFLD" id="SFLDS00113">
    <property type="entry name" value="Radical_SAM_Phosphomethylpyrim"/>
    <property type="match status" value="1"/>
</dbReference>
<feature type="chain" id="PRO_1000057595" description="Phosphomethylpyrimidine synthase">
    <location>
        <begin position="1"/>
        <end position="627"/>
    </location>
</feature>
<feature type="region of interest" description="Disordered" evidence="2">
    <location>
        <begin position="1"/>
        <end position="32"/>
    </location>
</feature>
<feature type="compositionally biased region" description="Polar residues" evidence="2">
    <location>
        <begin position="1"/>
        <end position="21"/>
    </location>
</feature>
<feature type="binding site" evidence="1">
    <location>
        <position position="231"/>
    </location>
    <ligand>
        <name>substrate</name>
    </ligand>
</feature>
<feature type="binding site" evidence="1">
    <location>
        <position position="260"/>
    </location>
    <ligand>
        <name>substrate</name>
    </ligand>
</feature>
<feature type="binding site" evidence="1">
    <location>
        <position position="289"/>
    </location>
    <ligand>
        <name>substrate</name>
    </ligand>
</feature>
<feature type="binding site" evidence="1">
    <location>
        <position position="325"/>
    </location>
    <ligand>
        <name>substrate</name>
    </ligand>
</feature>
<feature type="binding site" evidence="1">
    <location>
        <begin position="345"/>
        <end position="347"/>
    </location>
    <ligand>
        <name>substrate</name>
    </ligand>
</feature>
<feature type="binding site" evidence="1">
    <location>
        <begin position="386"/>
        <end position="389"/>
    </location>
    <ligand>
        <name>substrate</name>
    </ligand>
</feature>
<feature type="binding site" evidence="1">
    <location>
        <position position="425"/>
    </location>
    <ligand>
        <name>substrate</name>
    </ligand>
</feature>
<feature type="binding site" evidence="1">
    <location>
        <position position="429"/>
    </location>
    <ligand>
        <name>Zn(2+)</name>
        <dbReference type="ChEBI" id="CHEBI:29105"/>
    </ligand>
</feature>
<feature type="binding site" evidence="1">
    <location>
        <position position="452"/>
    </location>
    <ligand>
        <name>substrate</name>
    </ligand>
</feature>
<feature type="binding site" evidence="1">
    <location>
        <position position="493"/>
    </location>
    <ligand>
        <name>Zn(2+)</name>
        <dbReference type="ChEBI" id="CHEBI:29105"/>
    </ligand>
</feature>
<feature type="binding site" evidence="1">
    <location>
        <position position="573"/>
    </location>
    <ligand>
        <name>[4Fe-4S] cluster</name>
        <dbReference type="ChEBI" id="CHEBI:49883"/>
        <note>4Fe-4S-S-AdoMet</note>
    </ligand>
</feature>
<feature type="binding site" evidence="1">
    <location>
        <position position="576"/>
    </location>
    <ligand>
        <name>[4Fe-4S] cluster</name>
        <dbReference type="ChEBI" id="CHEBI:49883"/>
        <note>4Fe-4S-S-AdoMet</note>
    </ligand>
</feature>
<feature type="binding site" evidence="1">
    <location>
        <position position="581"/>
    </location>
    <ligand>
        <name>[4Fe-4S] cluster</name>
        <dbReference type="ChEBI" id="CHEBI:49883"/>
        <note>4Fe-4S-S-AdoMet</note>
    </ligand>
</feature>
<gene>
    <name evidence="1" type="primary">thiC</name>
    <name type="ordered locus">Pmen_0609</name>
</gene>
<accession>A4XPW1</accession>